<keyword id="KW-1185">Reference proteome</keyword>
<keyword id="KW-0964">Secreted</keyword>
<keyword id="KW-0732">Signal</keyword>
<name>CQ067_MOUSE</name>
<dbReference type="EMBL" id="AK040024">
    <property type="protein sequence ID" value="BAE20565.1"/>
    <property type="molecule type" value="mRNA"/>
</dbReference>
<dbReference type="EMBL" id="AL646096">
    <property type="status" value="NOT_ANNOTATED_CDS"/>
    <property type="molecule type" value="Genomic_DNA"/>
</dbReference>
<dbReference type="EMBL" id="CU424437">
    <property type="status" value="NOT_ANNOTATED_CDS"/>
    <property type="molecule type" value="Genomic_DNA"/>
</dbReference>
<dbReference type="CCDS" id="CCDS36279.1"/>
<dbReference type="RefSeq" id="NP_001028438.1">
    <property type="nucleotide sequence ID" value="NM_001033266.2"/>
</dbReference>
<dbReference type="RefSeq" id="XP_036012480.1">
    <property type="nucleotide sequence ID" value="XM_036156587.1"/>
</dbReference>
<dbReference type="SMR" id="Q3V3I5"/>
<dbReference type="FunCoup" id="Q3V3I5">
    <property type="interactions" value="1"/>
</dbReference>
<dbReference type="STRING" id="10090.ENSMUSP00000098184"/>
<dbReference type="PhosphoSitePlus" id="Q3V3I5"/>
<dbReference type="PaxDb" id="10090-ENSMUSP00000098184"/>
<dbReference type="Antibodypedia" id="52531">
    <property type="antibodies" value="9 antibodies from 7 providers"/>
</dbReference>
<dbReference type="Ensembl" id="ENSMUST00000100619.11">
    <property type="protein sequence ID" value="ENSMUSP00000098184.5"/>
    <property type="gene ID" value="ENSMUSG00000072553.11"/>
</dbReference>
<dbReference type="GeneID" id="217071"/>
<dbReference type="KEGG" id="mmu:217071"/>
<dbReference type="UCSC" id="uc007kwg.1">
    <property type="organism name" value="mouse"/>
</dbReference>
<dbReference type="AGR" id="MGI:2685371"/>
<dbReference type="MGI" id="MGI:2685371">
    <property type="gene designation" value="Gm525"/>
</dbReference>
<dbReference type="VEuPathDB" id="HostDB:ENSMUSG00000072553"/>
<dbReference type="eggNOG" id="ENOG502S8D0">
    <property type="taxonomic scope" value="Eukaryota"/>
</dbReference>
<dbReference type="GeneTree" id="ENSGT00390000006555"/>
<dbReference type="InParanoid" id="Q3V3I5"/>
<dbReference type="OMA" id="ETNMEYW"/>
<dbReference type="OrthoDB" id="9923832at2759"/>
<dbReference type="PhylomeDB" id="Q3V3I5"/>
<dbReference type="TreeFam" id="TF354165"/>
<dbReference type="BioGRID-ORCS" id="217071">
    <property type="hits" value="2 hits in 69 CRISPR screens"/>
</dbReference>
<dbReference type="ChiTaRS" id="Gm525">
    <property type="organism name" value="mouse"/>
</dbReference>
<dbReference type="PRO" id="PR:Q3V3I5"/>
<dbReference type="Proteomes" id="UP000000589">
    <property type="component" value="Chromosome 11"/>
</dbReference>
<dbReference type="RNAct" id="Q3V3I5">
    <property type="molecule type" value="protein"/>
</dbReference>
<dbReference type="Bgee" id="ENSMUSG00000072553">
    <property type="expression patterns" value="Expressed in blastoderm cell in morula and 35 other cell types or tissues"/>
</dbReference>
<dbReference type="ExpressionAtlas" id="Q3V3I5">
    <property type="expression patterns" value="baseline and differential"/>
</dbReference>
<dbReference type="GO" id="GO:0005576">
    <property type="term" value="C:extracellular region"/>
    <property type="evidence" value="ECO:0007669"/>
    <property type="project" value="UniProtKB-SubCell"/>
</dbReference>
<dbReference type="InterPro" id="IPR027870">
    <property type="entry name" value="DUF4543"/>
</dbReference>
<dbReference type="PANTHER" id="PTHR48415">
    <property type="entry name" value="GENE 525-RELATED"/>
    <property type="match status" value="1"/>
</dbReference>
<dbReference type="PANTHER" id="PTHR48415:SF1">
    <property type="entry name" value="GENE 525-RELATED"/>
    <property type="match status" value="1"/>
</dbReference>
<dbReference type="Pfam" id="PF15076">
    <property type="entry name" value="DUF4543"/>
    <property type="match status" value="1"/>
</dbReference>
<feature type="signal peptide" evidence="1">
    <location>
        <begin position="1"/>
        <end position="20"/>
    </location>
</feature>
<feature type="chain" id="PRO_0000287180" description="Uncharacterized protein C17orf67 homolog">
    <location>
        <begin position="21"/>
        <end position="90"/>
    </location>
</feature>
<organism>
    <name type="scientific">Mus musculus</name>
    <name type="common">Mouse</name>
    <dbReference type="NCBI Taxonomy" id="10090"/>
    <lineage>
        <taxon>Eukaryota</taxon>
        <taxon>Metazoa</taxon>
        <taxon>Chordata</taxon>
        <taxon>Craniata</taxon>
        <taxon>Vertebrata</taxon>
        <taxon>Euteleostomi</taxon>
        <taxon>Mammalia</taxon>
        <taxon>Eutheria</taxon>
        <taxon>Euarchontoglires</taxon>
        <taxon>Glires</taxon>
        <taxon>Rodentia</taxon>
        <taxon>Myomorpha</taxon>
        <taxon>Muroidea</taxon>
        <taxon>Muridae</taxon>
        <taxon>Murinae</taxon>
        <taxon>Mus</taxon>
        <taxon>Mus</taxon>
    </lineage>
</organism>
<sequence length="90" mass="10620">MEKLFVLVFALALLAFSSDASPILTEKQAKQLLRSRRQDRPNKPGFPDEPMREYMHHLLALEHRAEEQFLEHWLNPHCKPHCDRNIVHPV</sequence>
<comment type="subcellular location">
    <subcellularLocation>
        <location evidence="2">Secreted</location>
    </subcellularLocation>
</comment>
<accession>Q3V3I5</accession>
<accession>B2KGT0</accession>
<proteinExistence type="inferred from homology"/>
<evidence type="ECO:0000255" key="1"/>
<evidence type="ECO:0000305" key="2"/>
<protein>
    <recommendedName>
        <fullName>Uncharacterized protein C17orf67 homolog</fullName>
    </recommendedName>
</protein>
<reference key="1">
    <citation type="journal article" date="2005" name="Science">
        <title>The transcriptional landscape of the mammalian genome.</title>
        <authorList>
            <person name="Carninci P."/>
            <person name="Kasukawa T."/>
            <person name="Katayama S."/>
            <person name="Gough J."/>
            <person name="Frith M.C."/>
            <person name="Maeda N."/>
            <person name="Oyama R."/>
            <person name="Ravasi T."/>
            <person name="Lenhard B."/>
            <person name="Wells C."/>
            <person name="Kodzius R."/>
            <person name="Shimokawa K."/>
            <person name="Bajic V.B."/>
            <person name="Brenner S.E."/>
            <person name="Batalov S."/>
            <person name="Forrest A.R."/>
            <person name="Zavolan M."/>
            <person name="Davis M.J."/>
            <person name="Wilming L.G."/>
            <person name="Aidinis V."/>
            <person name="Allen J.E."/>
            <person name="Ambesi-Impiombato A."/>
            <person name="Apweiler R."/>
            <person name="Aturaliya R.N."/>
            <person name="Bailey T.L."/>
            <person name="Bansal M."/>
            <person name="Baxter L."/>
            <person name="Beisel K.W."/>
            <person name="Bersano T."/>
            <person name="Bono H."/>
            <person name="Chalk A.M."/>
            <person name="Chiu K.P."/>
            <person name="Choudhary V."/>
            <person name="Christoffels A."/>
            <person name="Clutterbuck D.R."/>
            <person name="Crowe M.L."/>
            <person name="Dalla E."/>
            <person name="Dalrymple B.P."/>
            <person name="de Bono B."/>
            <person name="Della Gatta G."/>
            <person name="di Bernardo D."/>
            <person name="Down T."/>
            <person name="Engstrom P."/>
            <person name="Fagiolini M."/>
            <person name="Faulkner G."/>
            <person name="Fletcher C.F."/>
            <person name="Fukushima T."/>
            <person name="Furuno M."/>
            <person name="Futaki S."/>
            <person name="Gariboldi M."/>
            <person name="Georgii-Hemming P."/>
            <person name="Gingeras T.R."/>
            <person name="Gojobori T."/>
            <person name="Green R.E."/>
            <person name="Gustincich S."/>
            <person name="Harbers M."/>
            <person name="Hayashi Y."/>
            <person name="Hensch T.K."/>
            <person name="Hirokawa N."/>
            <person name="Hill D."/>
            <person name="Huminiecki L."/>
            <person name="Iacono M."/>
            <person name="Ikeo K."/>
            <person name="Iwama A."/>
            <person name="Ishikawa T."/>
            <person name="Jakt M."/>
            <person name="Kanapin A."/>
            <person name="Katoh M."/>
            <person name="Kawasawa Y."/>
            <person name="Kelso J."/>
            <person name="Kitamura H."/>
            <person name="Kitano H."/>
            <person name="Kollias G."/>
            <person name="Krishnan S.P."/>
            <person name="Kruger A."/>
            <person name="Kummerfeld S.K."/>
            <person name="Kurochkin I.V."/>
            <person name="Lareau L.F."/>
            <person name="Lazarevic D."/>
            <person name="Lipovich L."/>
            <person name="Liu J."/>
            <person name="Liuni S."/>
            <person name="McWilliam S."/>
            <person name="Madan Babu M."/>
            <person name="Madera M."/>
            <person name="Marchionni L."/>
            <person name="Matsuda H."/>
            <person name="Matsuzawa S."/>
            <person name="Miki H."/>
            <person name="Mignone F."/>
            <person name="Miyake S."/>
            <person name="Morris K."/>
            <person name="Mottagui-Tabar S."/>
            <person name="Mulder N."/>
            <person name="Nakano N."/>
            <person name="Nakauchi H."/>
            <person name="Ng P."/>
            <person name="Nilsson R."/>
            <person name="Nishiguchi S."/>
            <person name="Nishikawa S."/>
            <person name="Nori F."/>
            <person name="Ohara O."/>
            <person name="Okazaki Y."/>
            <person name="Orlando V."/>
            <person name="Pang K.C."/>
            <person name="Pavan W.J."/>
            <person name="Pavesi G."/>
            <person name="Pesole G."/>
            <person name="Petrovsky N."/>
            <person name="Piazza S."/>
            <person name="Reed J."/>
            <person name="Reid J.F."/>
            <person name="Ring B.Z."/>
            <person name="Ringwald M."/>
            <person name="Rost B."/>
            <person name="Ruan Y."/>
            <person name="Salzberg S.L."/>
            <person name="Sandelin A."/>
            <person name="Schneider C."/>
            <person name="Schoenbach C."/>
            <person name="Sekiguchi K."/>
            <person name="Semple C.A."/>
            <person name="Seno S."/>
            <person name="Sessa L."/>
            <person name="Sheng Y."/>
            <person name="Shibata Y."/>
            <person name="Shimada H."/>
            <person name="Shimada K."/>
            <person name="Silva D."/>
            <person name="Sinclair B."/>
            <person name="Sperling S."/>
            <person name="Stupka E."/>
            <person name="Sugiura K."/>
            <person name="Sultana R."/>
            <person name="Takenaka Y."/>
            <person name="Taki K."/>
            <person name="Tammoja K."/>
            <person name="Tan S.L."/>
            <person name="Tang S."/>
            <person name="Taylor M.S."/>
            <person name="Tegner J."/>
            <person name="Teichmann S.A."/>
            <person name="Ueda H.R."/>
            <person name="van Nimwegen E."/>
            <person name="Verardo R."/>
            <person name="Wei C.L."/>
            <person name="Yagi K."/>
            <person name="Yamanishi H."/>
            <person name="Zabarovsky E."/>
            <person name="Zhu S."/>
            <person name="Zimmer A."/>
            <person name="Hide W."/>
            <person name="Bult C."/>
            <person name="Grimmond S.M."/>
            <person name="Teasdale R.D."/>
            <person name="Liu E.T."/>
            <person name="Brusic V."/>
            <person name="Quackenbush J."/>
            <person name="Wahlestedt C."/>
            <person name="Mattick J.S."/>
            <person name="Hume D.A."/>
            <person name="Kai C."/>
            <person name="Sasaki D."/>
            <person name="Tomaru Y."/>
            <person name="Fukuda S."/>
            <person name="Kanamori-Katayama M."/>
            <person name="Suzuki M."/>
            <person name="Aoki J."/>
            <person name="Arakawa T."/>
            <person name="Iida J."/>
            <person name="Imamura K."/>
            <person name="Itoh M."/>
            <person name="Kato T."/>
            <person name="Kawaji H."/>
            <person name="Kawagashira N."/>
            <person name="Kawashima T."/>
            <person name="Kojima M."/>
            <person name="Kondo S."/>
            <person name="Konno H."/>
            <person name="Nakano K."/>
            <person name="Ninomiya N."/>
            <person name="Nishio T."/>
            <person name="Okada M."/>
            <person name="Plessy C."/>
            <person name="Shibata K."/>
            <person name="Shiraki T."/>
            <person name="Suzuki S."/>
            <person name="Tagami M."/>
            <person name="Waki K."/>
            <person name="Watahiki A."/>
            <person name="Okamura-Oho Y."/>
            <person name="Suzuki H."/>
            <person name="Kawai J."/>
            <person name="Hayashizaki Y."/>
        </authorList>
    </citation>
    <scope>NUCLEOTIDE SEQUENCE [LARGE SCALE MRNA]</scope>
    <source>
        <strain>C57BL/6J</strain>
        <tissue>Thymus</tissue>
    </source>
</reference>
<reference key="2">
    <citation type="journal article" date="2009" name="PLoS Biol.">
        <title>Lineage-specific biology revealed by a finished genome assembly of the mouse.</title>
        <authorList>
            <person name="Church D.M."/>
            <person name="Goodstadt L."/>
            <person name="Hillier L.W."/>
            <person name="Zody M.C."/>
            <person name="Goldstein S."/>
            <person name="She X."/>
            <person name="Bult C.J."/>
            <person name="Agarwala R."/>
            <person name="Cherry J.L."/>
            <person name="DiCuccio M."/>
            <person name="Hlavina W."/>
            <person name="Kapustin Y."/>
            <person name="Meric P."/>
            <person name="Maglott D."/>
            <person name="Birtle Z."/>
            <person name="Marques A.C."/>
            <person name="Graves T."/>
            <person name="Zhou S."/>
            <person name="Teague B."/>
            <person name="Potamousis K."/>
            <person name="Churas C."/>
            <person name="Place M."/>
            <person name="Herschleb J."/>
            <person name="Runnheim R."/>
            <person name="Forrest D."/>
            <person name="Amos-Landgraf J."/>
            <person name="Schwartz D.C."/>
            <person name="Cheng Z."/>
            <person name="Lindblad-Toh K."/>
            <person name="Eichler E.E."/>
            <person name="Ponting C.P."/>
        </authorList>
    </citation>
    <scope>NUCLEOTIDE SEQUENCE [LARGE SCALE GENOMIC DNA]</scope>
    <source>
        <strain>C57BL/6J</strain>
    </source>
</reference>
<gene>
    <name type="primary">Gm525</name>
</gene>